<dbReference type="EMBL" id="J03685">
    <property type="protein sequence ID" value="AAA26230.1"/>
    <property type="molecule type" value="Genomic_DNA"/>
</dbReference>
<dbReference type="EMBL" id="AH010242">
    <property type="protein sequence ID" value="AAG61002.1"/>
    <property type="molecule type" value="Genomic_DNA"/>
</dbReference>
<dbReference type="EMBL" id="BA000040">
    <property type="protein sequence ID" value="BAC47296.1"/>
    <property type="molecule type" value="Genomic_DNA"/>
</dbReference>
<dbReference type="PIR" id="S27497">
    <property type="entry name" value="S27497"/>
</dbReference>
<dbReference type="RefSeq" id="NP_768671.1">
    <property type="nucleotide sequence ID" value="NC_004463.1"/>
</dbReference>
<dbReference type="RefSeq" id="WP_011084828.1">
    <property type="nucleotide sequence ID" value="NZ_CP011360.1"/>
</dbReference>
<dbReference type="SMR" id="P26025"/>
<dbReference type="STRING" id="224911.AAV28_06990"/>
<dbReference type="EnsemblBacteria" id="BAC47296">
    <property type="protein sequence ID" value="BAC47296"/>
    <property type="gene ID" value="BAC47296"/>
</dbReference>
<dbReference type="KEGG" id="bja:blr2031"/>
<dbReference type="PATRIC" id="fig|224911.44.peg.1532"/>
<dbReference type="eggNOG" id="COG0842">
    <property type="taxonomic scope" value="Bacteria"/>
</dbReference>
<dbReference type="HOGENOM" id="CLU_039483_3_1_5"/>
<dbReference type="InParanoid" id="P26025"/>
<dbReference type="OrthoDB" id="9778589at2"/>
<dbReference type="PhylomeDB" id="P26025"/>
<dbReference type="Proteomes" id="UP000002526">
    <property type="component" value="Chromosome"/>
</dbReference>
<dbReference type="GO" id="GO:0043190">
    <property type="term" value="C:ATP-binding cassette (ABC) transporter complex"/>
    <property type="evidence" value="ECO:0007669"/>
    <property type="project" value="InterPro"/>
</dbReference>
<dbReference type="GO" id="GO:0140359">
    <property type="term" value="F:ABC-type transporter activity"/>
    <property type="evidence" value="ECO:0007669"/>
    <property type="project" value="InterPro"/>
</dbReference>
<dbReference type="GO" id="GO:0015772">
    <property type="term" value="P:oligosaccharide transport"/>
    <property type="evidence" value="ECO:0007669"/>
    <property type="project" value="InterPro"/>
</dbReference>
<dbReference type="InterPro" id="IPR013525">
    <property type="entry name" value="ABC2_TM"/>
</dbReference>
<dbReference type="InterPro" id="IPR047817">
    <property type="entry name" value="ABC2_TM_bact-type"/>
</dbReference>
<dbReference type="InterPro" id="IPR000412">
    <property type="entry name" value="ABC_2_transport"/>
</dbReference>
<dbReference type="InterPro" id="IPR005981">
    <property type="entry name" value="ABC_transptNodJ"/>
</dbReference>
<dbReference type="InterPro" id="IPR051784">
    <property type="entry name" value="Nod_factor_ABC_transporter"/>
</dbReference>
<dbReference type="NCBIfam" id="TIGR01291">
    <property type="entry name" value="nodJ"/>
    <property type="match status" value="1"/>
</dbReference>
<dbReference type="PANTHER" id="PTHR43229">
    <property type="entry name" value="NODULATION PROTEIN J"/>
    <property type="match status" value="1"/>
</dbReference>
<dbReference type="PANTHER" id="PTHR43229:SF2">
    <property type="entry name" value="NODULATION PROTEIN J"/>
    <property type="match status" value="1"/>
</dbReference>
<dbReference type="Pfam" id="PF01061">
    <property type="entry name" value="ABC2_membrane"/>
    <property type="match status" value="1"/>
</dbReference>
<dbReference type="PIRSF" id="PIRSF006648">
    <property type="entry name" value="DrrB"/>
    <property type="match status" value="1"/>
</dbReference>
<dbReference type="PRINTS" id="PR00164">
    <property type="entry name" value="ABC2TRNSPORT"/>
</dbReference>
<dbReference type="PROSITE" id="PS51012">
    <property type="entry name" value="ABC_TM2"/>
    <property type="match status" value="1"/>
</dbReference>
<proteinExistence type="inferred from homology"/>
<gene>
    <name type="primary">nodJ</name>
    <name type="ordered locus">blr2031</name>
</gene>
<evidence type="ECO:0000250" key="1"/>
<evidence type="ECO:0000255" key="2"/>
<evidence type="ECO:0000255" key="3">
    <source>
        <dbReference type="PROSITE-ProRule" id="PRU00442"/>
    </source>
</evidence>
<evidence type="ECO:0000305" key="4"/>
<name>NODJ_BRADU</name>
<accession>P26025</accession>
<sequence>MDDGYASVMPANAYNWTAVWRRNYLAWRKVALASLLGNLADPITNLFGLGFGLGLIVGRVEGTSYIAFLAAGMVAISAMTSATFETLYAAFARMDVKRTWEGILFTQLTLGDIVLGELVWAASKSVLAGTAIGIVAATLGYASWTSVLCAIPTIALTGLVFASLAMVVISLAPTYDYFVFYQSLVLTPMVFLCGAVFPTSQMPDSFQHFAGLLPLAHSVDLIRPVMLERGADNAALHVGALCVYAVLPFFASIALFRRRLLR</sequence>
<keyword id="KW-0997">Cell inner membrane</keyword>
<keyword id="KW-1003">Cell membrane</keyword>
<keyword id="KW-0472">Membrane</keyword>
<keyword id="KW-0536">Nodulation</keyword>
<keyword id="KW-1185">Reference proteome</keyword>
<keyword id="KW-0812">Transmembrane</keyword>
<keyword id="KW-1133">Transmembrane helix</keyword>
<keyword id="KW-0813">Transport</keyword>
<feature type="chain" id="PRO_0000182985" description="Nodulation protein J">
    <location>
        <begin position="1"/>
        <end position="262"/>
    </location>
</feature>
<feature type="transmembrane region" description="Helical" evidence="2">
    <location>
        <begin position="37"/>
        <end position="57"/>
    </location>
</feature>
<feature type="transmembrane region" description="Helical" evidence="2">
    <location>
        <begin position="64"/>
        <end position="84"/>
    </location>
</feature>
<feature type="transmembrane region" description="Helical" evidence="2">
    <location>
        <begin position="102"/>
        <end position="122"/>
    </location>
</feature>
<feature type="transmembrane region" description="Helical" evidence="2">
    <location>
        <begin position="125"/>
        <end position="145"/>
    </location>
</feature>
<feature type="transmembrane region" description="Helical" evidence="2">
    <location>
        <begin position="149"/>
        <end position="169"/>
    </location>
</feature>
<feature type="transmembrane region" description="Helical" evidence="2">
    <location>
        <begin position="177"/>
        <end position="197"/>
    </location>
</feature>
<feature type="transmembrane region" description="Helical" evidence="2">
    <location>
        <begin position="236"/>
        <end position="256"/>
    </location>
</feature>
<feature type="domain" description="ABC transmembrane type-2" evidence="3">
    <location>
        <begin position="33"/>
        <end position="259"/>
    </location>
</feature>
<comment type="function">
    <text evidence="1">Part of the ABC transporter complex NodIJ involved in the export of the nodulation factors (Nod factors), the bacterial signal molecules that induce symbiosis and subsequent nodulation induction. Nod factors are LCO (lipo-chitin oligosaccharide), a modified beta-1,4-linked N-acetylglucosamine oligosaccharide. This subunit encodes the transporter (By similarity).</text>
</comment>
<comment type="subunit">
    <text evidence="4">The complex is composed of two ATP-binding proteins (NodI) and two transmembrane proteins (NodJ).</text>
</comment>
<comment type="subcellular location">
    <subcellularLocation>
        <location evidence="4">Cell inner membrane</location>
        <topology evidence="4">Multi-pass membrane protein</topology>
    </subcellularLocation>
</comment>
<comment type="similarity">
    <text evidence="4">Belongs to the ABC-2 integral membrane protein family. Lipooligosaccharide exporter (TC 3.A.1.102) subfamily.</text>
</comment>
<organism>
    <name type="scientific">Bradyrhizobium diazoefficiens (strain JCM 10833 / BCRC 13528 / IAM 13628 / NBRC 14792 / USDA 110)</name>
    <dbReference type="NCBI Taxonomy" id="224911"/>
    <lineage>
        <taxon>Bacteria</taxon>
        <taxon>Pseudomonadati</taxon>
        <taxon>Pseudomonadota</taxon>
        <taxon>Alphaproteobacteria</taxon>
        <taxon>Hyphomicrobiales</taxon>
        <taxon>Nitrobacteraceae</taxon>
        <taxon>Bradyrhizobium</taxon>
    </lineage>
</organism>
<reference key="1">
    <citation type="journal article" date="1990" name="Mol. Plant Microbe Interact.">
        <title>Identification of nodS and nodU, two inducible genes inserted between the Bradyrhizobium japonicum nodYABC and nodIJ genes.</title>
        <authorList>
            <person name="Goettfert M."/>
            <person name="Hitz S."/>
            <person name="Hennecke H."/>
        </authorList>
    </citation>
    <scope>NUCLEOTIDE SEQUENCE [GENOMIC DNA]</scope>
    <source>
        <strain>JCM 10833 / BCRC 13528 / IAM 13628 / NBRC 14792 / USDA 110</strain>
    </source>
</reference>
<reference key="2">
    <citation type="journal article" date="2001" name="J. Bacteriol.">
        <title>Potential symbiosis-specific genes uncovered by sequencing a 410-kb DNA region of the Bradyrhizobium japonicum chromosome.</title>
        <authorList>
            <person name="Goettfert M."/>
            <person name="Roethlisberger S."/>
            <person name="Kuendig C."/>
            <person name="Beck C."/>
            <person name="Marty R."/>
            <person name="Hennecke H."/>
        </authorList>
    </citation>
    <scope>NUCLEOTIDE SEQUENCE [GENOMIC DNA]</scope>
    <source>
        <strain>USDA 110spc4</strain>
    </source>
</reference>
<reference key="3">
    <citation type="journal article" date="2002" name="DNA Res.">
        <title>Complete genomic sequence of nitrogen-fixing symbiotic bacterium Bradyrhizobium japonicum USDA110.</title>
        <authorList>
            <person name="Kaneko T."/>
            <person name="Nakamura Y."/>
            <person name="Sato S."/>
            <person name="Minamisawa K."/>
            <person name="Uchiumi T."/>
            <person name="Sasamoto S."/>
            <person name="Watanabe A."/>
            <person name="Idesawa K."/>
            <person name="Iriguchi M."/>
            <person name="Kawashima K."/>
            <person name="Kohara M."/>
            <person name="Matsumoto M."/>
            <person name="Shimpo S."/>
            <person name="Tsuruoka H."/>
            <person name="Wada T."/>
            <person name="Yamada M."/>
            <person name="Tabata S."/>
        </authorList>
    </citation>
    <scope>NUCLEOTIDE SEQUENCE [LARGE SCALE GENOMIC DNA]</scope>
    <source>
        <strain>JCM 10833 / BCRC 13528 / IAM 13628 / NBRC 14792 / USDA 110</strain>
    </source>
</reference>
<protein>
    <recommendedName>
        <fullName>Nodulation protein J</fullName>
    </recommendedName>
</protein>